<dbReference type="EMBL" id="L03301">
    <property type="protein sequence ID" value="AAB04141.1"/>
    <property type="molecule type" value="mRNA"/>
</dbReference>
<dbReference type="EMBL" id="AF130360">
    <property type="protein sequence ID" value="AAF34731.1"/>
    <property type="molecule type" value="Genomic_DNA"/>
</dbReference>
<dbReference type="PIR" id="PC1254">
    <property type="entry name" value="PC1254"/>
</dbReference>
<dbReference type="SMR" id="Q06100"/>
<dbReference type="VEuPathDB" id="FungiDB:CC1G_05003"/>
<dbReference type="VEuPathDB" id="FungiDB:CC2G_013119"/>
<dbReference type="OMA" id="VRVWINI"/>
<dbReference type="GO" id="GO:0031410">
    <property type="term" value="C:cytoplasmic vesicle"/>
    <property type="evidence" value="ECO:0000314"/>
    <property type="project" value="UniProtKB"/>
</dbReference>
<dbReference type="GO" id="GO:0012505">
    <property type="term" value="C:endomembrane system"/>
    <property type="evidence" value="ECO:0007669"/>
    <property type="project" value="UniProtKB-SubCell"/>
</dbReference>
<dbReference type="GO" id="GO:0031012">
    <property type="term" value="C:extracellular matrix"/>
    <property type="evidence" value="ECO:0000314"/>
    <property type="project" value="UniProtKB"/>
</dbReference>
<dbReference type="GO" id="GO:0005576">
    <property type="term" value="C:extracellular region"/>
    <property type="evidence" value="ECO:0007669"/>
    <property type="project" value="UniProtKB-KW"/>
</dbReference>
<dbReference type="GO" id="GO:0009277">
    <property type="term" value="C:fungal-type cell wall"/>
    <property type="evidence" value="ECO:0000314"/>
    <property type="project" value="UniProtKB"/>
</dbReference>
<dbReference type="GO" id="GO:0016020">
    <property type="term" value="C:membrane"/>
    <property type="evidence" value="ECO:0007669"/>
    <property type="project" value="UniProtKB-KW"/>
</dbReference>
<dbReference type="GO" id="GO:0030395">
    <property type="term" value="F:lactose binding"/>
    <property type="evidence" value="ECO:0000314"/>
    <property type="project" value="UniProtKB"/>
</dbReference>
<dbReference type="GO" id="GO:0030584">
    <property type="term" value="P:sporocarp development"/>
    <property type="evidence" value="ECO:0000303"/>
    <property type="project" value="UniProtKB"/>
</dbReference>
<dbReference type="CDD" id="cd00070">
    <property type="entry name" value="GLECT"/>
    <property type="match status" value="1"/>
</dbReference>
<dbReference type="Gene3D" id="2.60.120.200">
    <property type="match status" value="1"/>
</dbReference>
<dbReference type="InterPro" id="IPR013320">
    <property type="entry name" value="ConA-like_dom_sf"/>
</dbReference>
<dbReference type="InterPro" id="IPR001079">
    <property type="entry name" value="Galectin_CRD"/>
</dbReference>
<dbReference type="Pfam" id="PF00337">
    <property type="entry name" value="Gal-bind_lectin"/>
    <property type="match status" value="1"/>
</dbReference>
<dbReference type="SMART" id="SM00276">
    <property type="entry name" value="GLECT"/>
    <property type="match status" value="1"/>
</dbReference>
<dbReference type="SUPFAM" id="SSF49899">
    <property type="entry name" value="Concanavalin A-like lectins/glucanases"/>
    <property type="match status" value="1"/>
</dbReference>
<dbReference type="PROSITE" id="PS51304">
    <property type="entry name" value="GALECTIN"/>
    <property type="match status" value="1"/>
</dbReference>
<sequence>MLYHLFVNNQIKLQDDFKAEAVATIRSSVFNSKGGTTVFNFLSAGENILLHISIRPGENAIVFNSRTKGGAWGPEERVPYAGKFKGPNPSITVLDHGDRFQILFDNATAIYYTKRIKENAAAIAYSAENSLFSSPVTVDIHGLLPPLPPA</sequence>
<accession>Q06100</accession>
<accession>Q00358</accession>
<proteinExistence type="evidence at protein level"/>
<name>CGL1_COPCI</name>
<keyword id="KW-0134">Cell wall</keyword>
<keyword id="KW-0903">Direct protein sequencing</keyword>
<keyword id="KW-0272">Extracellular matrix</keyword>
<keyword id="KW-0293">Fruiting body</keyword>
<keyword id="KW-0430">Lectin</keyword>
<keyword id="KW-0472">Membrane</keyword>
<keyword id="KW-0964">Secreted</keyword>
<protein>
    <recommendedName>
        <fullName>Galectin-1</fullName>
    </recommendedName>
    <alternativeName>
        <fullName>Cgl-I</fullName>
    </alternativeName>
    <alternativeName>
        <fullName>Galectin I</fullName>
    </alternativeName>
</protein>
<gene>
    <name evidence="10" type="primary">Cgl1</name>
    <name evidence="9" type="synonym">CglI</name>
</gene>
<comment type="function">
    <text evidence="5 6">Binds lactose. May play a role in fruiting body formation.</text>
</comment>
<comment type="subunit">
    <text evidence="1">Homotetramer. Oligomerization is required for carbohydrate binding.</text>
</comment>
<comment type="subcellular location">
    <subcellularLocation>
        <location evidence="3">Secreted</location>
        <location evidence="3">Extracellular space</location>
        <location evidence="3">Extracellular matrix</location>
    </subcellularLocation>
    <subcellularLocation>
        <location evidence="3">Secreted</location>
        <location evidence="3">Cell wall</location>
    </subcellularLocation>
    <subcellularLocation>
        <location evidence="3">Endomembrane system</location>
    </subcellularLocation>
    <text>Detected in extracellular matrix, cell wall and cytoplasmic membrane-bound bodies.</text>
</comment>
<comment type="tissue specificity">
    <text evidence="3 4">Most abundant in fruiting bodies. Very low levels of expression in asexual vegetative mycelia.</text>
</comment>
<comment type="developmental stage">
    <text evidence="4">Most abundant prior to premeiotic S-phase, remains high from karyogamy to early pachytene, declines drastically by late pachytene and diplotene, and is undetectable by sterigma stage.</text>
</comment>
<comment type="induction">
    <text evidence="3">Repressed by continuous light.</text>
</comment>
<comment type="mass spectrometry"/>
<comment type="caution">
    <text evidence="8">Was originally thought to be an endonuclease subunit.</text>
</comment>
<feature type="chain" id="PRO_0000076967" description="Galectin-1">
    <location>
        <begin position="1"/>
        <end position="150"/>
    </location>
</feature>
<feature type="domain" description="Galectin" evidence="2">
    <location>
        <begin position="9"/>
        <end position="141"/>
    </location>
</feature>
<feature type="binding site" evidence="1">
    <location>
        <position position="51"/>
    </location>
    <ligand>
        <name>a carbohydrate</name>
        <dbReference type="ChEBI" id="CHEBI:16646"/>
    </ligand>
</feature>
<feature type="binding site" evidence="1">
    <location>
        <position position="55"/>
    </location>
    <ligand>
        <name>a carbohydrate</name>
        <dbReference type="ChEBI" id="CHEBI:16646"/>
    </ligand>
</feature>
<feature type="binding site" evidence="1">
    <location>
        <position position="64"/>
    </location>
    <ligand>
        <name>a carbohydrate</name>
        <dbReference type="ChEBI" id="CHEBI:16646"/>
    </ligand>
</feature>
<feature type="binding site" evidence="1">
    <location>
        <position position="75"/>
    </location>
    <ligand>
        <name>a carbohydrate</name>
        <dbReference type="ChEBI" id="CHEBI:16646"/>
    </ligand>
</feature>
<feature type="sequence conflict" description="In Ref. 1 and 3; AA sequence." evidence="7" ref="1 3">
    <original>H</original>
    <variation>R</variation>
    <location>
        <position position="4"/>
    </location>
</feature>
<organism>
    <name type="scientific">Coprinopsis cinerea</name>
    <name type="common">Inky cap fungus</name>
    <name type="synonym">Hormographiella aspergillata</name>
    <dbReference type="NCBI Taxonomy" id="5346"/>
    <lineage>
        <taxon>Eukaryota</taxon>
        <taxon>Fungi</taxon>
        <taxon>Dikarya</taxon>
        <taxon>Basidiomycota</taxon>
        <taxon>Agaricomycotina</taxon>
        <taxon>Agaricomycetes</taxon>
        <taxon>Agaricomycetidae</taxon>
        <taxon>Agaricales</taxon>
        <taxon>Agaricineae</taxon>
        <taxon>Psathyrellaceae</taxon>
        <taxon>Coprinopsis</taxon>
    </lineage>
</organism>
<reference evidence="7 9" key="1">
    <citation type="journal article" date="1997" name="J. Biol. Chem.">
        <title>Fungal galectins, sequence and specificity of two isolectins from Coprinus cinereus.</title>
        <authorList>
            <person name="Cooper D.N.W."/>
            <person name="Boulianne R.P."/>
            <person name="Charlton S."/>
            <person name="Farrell E.M."/>
            <person name="Sucher A."/>
            <person name="Lu B.C."/>
        </authorList>
    </citation>
    <scope>NUCLEOTIDE SEQUENCE [MRNA]</scope>
    <scope>PROTEIN SEQUENCE OF 1-20</scope>
    <scope>FUNCTION</scope>
    <scope>MASS SPECTROMETRY</scope>
    <source>
        <strain>JR52</strain>
    </source>
</reference>
<reference evidence="7 10" key="2">
    <citation type="journal article" date="2000" name="Microbiology">
        <title>Fruiting body development in Coprinus cinereus: regulated expression of two galectins secreted by a non-classical pathway.</title>
        <authorList>
            <person name="Boulianne R.P."/>
            <person name="Liu Y."/>
            <person name="Aebi M."/>
            <person name="Lu B.C."/>
            <person name="Kuees U."/>
        </authorList>
    </citation>
    <scope>NUCLEOTIDE SEQUENCE [GENOMIC DNA]</scope>
    <scope>SUBCELLULAR LOCATION</scope>
    <scope>TISSUE SPECIFICITY</scope>
    <scope>REPRESSION</scope>
    <source>
        <strain>AmutBmut</strain>
    </source>
</reference>
<reference evidence="7 9" key="3">
    <citation type="journal article" date="1992" name="Gene">
        <title>Cloning and differential expression during the sexual cycle of a meiotic endonuclease-encoding gene from the basidiomycete Coprinus cinereus.</title>
        <authorList>
            <person name="Charlton S."/>
            <person name="Boulianne R.P."/>
            <person name="Chow Y.-C."/>
            <person name="Lu B.C."/>
        </authorList>
    </citation>
    <scope>NUCLEOTIDE SEQUENCE [MRNA] OF 1-129</scope>
    <scope>PROTEIN SEQUENCE OF 1-20</scope>
    <scope>TISSUE SPECIFICITY</scope>
    <scope>DEVELOPMENTAL STAGE</scope>
    <source>
        <tissue evidence="4">Fruiting body</tissue>
    </source>
</reference>
<evidence type="ECO:0000250" key="1"/>
<evidence type="ECO:0000255" key="2">
    <source>
        <dbReference type="PROSITE-ProRule" id="PRU00639"/>
    </source>
</evidence>
<evidence type="ECO:0000269" key="3">
    <source>
    </source>
</evidence>
<evidence type="ECO:0000269" key="4">
    <source>
    </source>
</evidence>
<evidence type="ECO:0000269" key="5">
    <source>
    </source>
</evidence>
<evidence type="ECO:0000303" key="6">
    <source>
    </source>
</evidence>
<evidence type="ECO:0000305" key="7"/>
<evidence type="ECO:0000305" key="8">
    <source>
    </source>
</evidence>
<evidence type="ECO:0000312" key="9">
    <source>
        <dbReference type="EMBL" id="AAB04141.1"/>
    </source>
</evidence>
<evidence type="ECO:0000312" key="10">
    <source>
        <dbReference type="EMBL" id="AAF34731.1"/>
    </source>
</evidence>